<keyword id="KW-0235">DNA replication</keyword>
<keyword id="KW-0238">DNA-binding</keyword>
<keyword id="KW-0239">DNA-directed DNA polymerase</keyword>
<keyword id="KW-0244">Early protein</keyword>
<keyword id="KW-0269">Exonuclease</keyword>
<keyword id="KW-0378">Hydrolase</keyword>
<keyword id="KW-0460">Magnesium</keyword>
<keyword id="KW-0479">Metal-binding</keyword>
<keyword id="KW-0540">Nuclease</keyword>
<keyword id="KW-0547">Nucleotide-binding</keyword>
<keyword id="KW-0548">Nucleotidyltransferase</keyword>
<keyword id="KW-0808">Transferase</keyword>
<keyword id="KW-1194">Viral DNA replication</keyword>
<comment type="function">
    <text evidence="1">Polymerase responsible for protein-primed viral DNA replication by strand displacement with high processivity and fidelity. To start replication, the DNA polymerase forms a heterodimer with a free primer terminal protein (TP), recognizes the replication origins at both 5' ends of the linear chromosome, and initiates replication using as primer the OH-group of Ser-232 of the TP. This polymerase possesses three enzymatic activities: DNA synthesis (polymerase), primer terminal protein (TP) deoxynucleotidylation, which is the formation of a covalent linkage (phosphoester) between the hydroxyl group of a specific serine residue in TP and 5'-dAMP, a reaction directed by the second T at the 3' end, and 3' to 5' exonuclease activity. Exonuclease activity has a proofreading purpose.</text>
</comment>
<comment type="catalytic activity">
    <reaction evidence="1">
        <text>DNA(n) + a 2'-deoxyribonucleoside 5'-triphosphate = DNA(n+1) + diphosphate</text>
        <dbReference type="Rhea" id="RHEA:22508"/>
        <dbReference type="Rhea" id="RHEA-COMP:17339"/>
        <dbReference type="Rhea" id="RHEA-COMP:17340"/>
        <dbReference type="ChEBI" id="CHEBI:33019"/>
        <dbReference type="ChEBI" id="CHEBI:61560"/>
        <dbReference type="ChEBI" id="CHEBI:173112"/>
        <dbReference type="EC" id="2.7.7.7"/>
    </reaction>
</comment>
<comment type="cofactor">
    <cofactor evidence="1">
        <name>Mg(2+)</name>
        <dbReference type="ChEBI" id="CHEBI:18420"/>
    </cofactor>
</comment>
<comment type="subunit">
    <text evidence="1">Interacts with the primer terminal protein; this interaction allows the initiation of TP-primed DNA replication at both viral DNA ends. Interacts with DNA.</text>
</comment>
<comment type="domain">
    <text evidence="1">The N-terminus contains the 3'-5' exonuclease activity and strand displacement ability. The C-terminus contains the protein-primed initiation, DNA polymerization and pyrophosphorolytic activities.</text>
</comment>
<comment type="miscellaneous">
    <text evidence="1">This DNA polymerase requires a protein as a primer.</text>
</comment>
<comment type="similarity">
    <text evidence="2">Belongs to the DNA polymerase type-B family.</text>
</comment>
<organismHost>
    <name type="scientific">Bacillus subtilis</name>
    <dbReference type="NCBI Taxonomy" id="1423"/>
</organismHost>
<feature type="chain" id="PRO_0000046543" description="DNA polymerase">
    <location>
        <begin position="1"/>
        <end position="572"/>
    </location>
</feature>
<feature type="region of interest" description="3'-5' exonuclease and strand displacement activities" evidence="1">
    <location>
        <begin position="1"/>
        <end position="222"/>
    </location>
</feature>
<feature type="region of interest" description="Interaction with the primer terminal protein" evidence="1">
    <location>
        <begin position="56"/>
        <end position="66"/>
    </location>
</feature>
<feature type="region of interest" description="DNA-binding; Involved in the formation of a stable complex between TP and phi29 DNA polymerase" evidence="1">
    <location>
        <begin position="223"/>
        <end position="226"/>
    </location>
</feature>
<feature type="region of interest" description="Initiation, polymerization and pyrophosphorolytic activities" evidence="1">
    <location>
        <begin position="227"/>
        <end position="572"/>
    </location>
</feature>
<feature type="binding site" evidence="1">
    <location>
        <position position="142"/>
    </location>
    <ligand>
        <name>Mg(2+)</name>
        <dbReference type="ChEBI" id="CHEBI:18420"/>
        <label>1</label>
    </ligand>
</feature>
<feature type="binding site" evidence="1">
    <location>
        <position position="166"/>
    </location>
    <ligand>
        <name>Mg(2+)</name>
        <dbReference type="ChEBI" id="CHEBI:18420"/>
        <label>1</label>
    </ligand>
</feature>
<feature type="binding site" evidence="1">
    <location>
        <position position="246"/>
    </location>
    <ligand>
        <name>Mg(2+)</name>
        <dbReference type="ChEBI" id="CHEBI:18420"/>
        <label>2</label>
        <note>catalytic</note>
    </ligand>
</feature>
<feature type="binding site" evidence="1">
    <location>
        <position position="247"/>
    </location>
    <ligand>
        <name>Mg(2+)</name>
        <dbReference type="ChEBI" id="CHEBI:18420"/>
        <label>2</label>
        <note>catalytic</note>
    </ligand>
</feature>
<feature type="binding site" evidence="1">
    <location>
        <position position="251"/>
    </location>
    <ligand>
        <name>5-methyl-UTP</name>
        <dbReference type="ChEBI" id="CHEBI:63527"/>
    </ligand>
</feature>
<feature type="binding site" evidence="1">
    <location>
        <position position="368"/>
    </location>
    <ligand>
        <name>5-methyl-UTP</name>
        <dbReference type="ChEBI" id="CHEBI:63527"/>
    </ligand>
</feature>
<feature type="binding site" evidence="1">
    <location>
        <position position="380"/>
    </location>
    <ligand>
        <name>5-methyl-UTP</name>
        <dbReference type="ChEBI" id="CHEBI:63527"/>
    </ligand>
</feature>
<feature type="binding site" evidence="1">
    <location>
        <position position="453"/>
    </location>
    <ligand>
        <name>Mg(2+)</name>
        <dbReference type="ChEBI" id="CHEBI:18420"/>
        <label>2</label>
        <note>catalytic</note>
    </ligand>
</feature>
<feature type="binding site" evidence="1">
    <location>
        <position position="455"/>
    </location>
    <ligand>
        <name>5-methyl-UTP</name>
        <dbReference type="ChEBI" id="CHEBI:63527"/>
    </ligand>
</feature>
<feature type="binding site" evidence="1">
    <location>
        <position position="455"/>
    </location>
    <ligand>
        <name>Mg(2+)</name>
        <dbReference type="ChEBI" id="CHEBI:18420"/>
        <label>2</label>
        <note>catalytic</note>
    </ligand>
</feature>
<feature type="site" description="Essential for 3'-5' exonucleolysis" evidence="1">
    <location>
        <position position="9"/>
    </location>
</feature>
<feature type="site" description="Essential for 3'-5' exonucleolysis" evidence="1">
    <location>
        <position position="11"/>
    </location>
</feature>
<feature type="site" description="Essential for 3'-5' exonucleolysis" evidence="1">
    <location>
        <position position="62"/>
    </location>
</feature>
<feature type="site" description="Involved in binding template-primer structures" evidence="1">
    <location>
        <position position="90"/>
    </location>
</feature>
<feature type="site" description="Critical for 3'-5' exonucleolysis" evidence="1">
    <location>
        <position position="119"/>
    </location>
</feature>
<feature type="site" description="Essential for 3'-5' exonucleolysis" evidence="1">
    <location>
        <position position="119"/>
    </location>
</feature>
<feature type="site" description="Essential for 3'-5' exonucleolysis" evidence="1">
    <location>
        <position position="120"/>
    </location>
</feature>
<feature type="site" description="Probably involved in binding template-primer structures" evidence="1">
    <location>
        <position position="249"/>
    </location>
</feature>
<feature type="site" description="Probably involved in nucleotide binding selection" evidence="1">
    <location>
        <position position="251"/>
    </location>
</feature>
<feature type="site" description="Probably involved in nucleotide binding selection" evidence="1">
    <location>
        <position position="380"/>
    </location>
</feature>
<feature type="site" description="Probably involved in binding template-primer structures" evidence="1">
    <location>
        <position position="384"/>
    </location>
</feature>
<feature type="site" description="Probably involved in nucleotide binding selection" evidence="1">
    <location>
        <position position="387"/>
    </location>
</feature>
<feature type="site" description="Probably involved in binding template-primer structures" evidence="1">
    <location>
        <position position="388"/>
    </location>
</feature>
<feature type="site" description="Probably involved in binding template-primer structures" evidence="1">
    <location>
        <position position="431"/>
    </location>
</feature>
<feature type="site" description="Probably involved in binding template-primer structures" evidence="1">
    <location>
        <position position="435"/>
    </location>
</feature>
<feature type="site" description="Probably involved in binding template-primer structures" evidence="1">
    <location>
        <position position="495"/>
    </location>
</feature>
<feature type="site" description="Probably involved in binding template-primer structures" evidence="1">
    <location>
        <position position="497"/>
    </location>
</feature>
<feature type="site" description="Stabilizes the primer-terminus at the polymerization active site and contributes to the coordination between the exonuclease and polymerazation activities" evidence="1">
    <location>
        <position position="526"/>
    </location>
</feature>
<organism>
    <name type="scientific">Bacillus phage PZA</name>
    <name type="common">Bacteriophage PZA</name>
    <dbReference type="NCBI Taxonomy" id="10757"/>
    <lineage>
        <taxon>Viruses</taxon>
        <taxon>Duplodnaviria</taxon>
        <taxon>Heunggongvirae</taxon>
        <taxon>Uroviricota</taxon>
        <taxon>Caudoviricetes</taxon>
        <taxon>Salasmaviridae</taxon>
        <taxon>Picovirinae</taxon>
        <taxon>Salasvirus</taxon>
        <taxon>Salasvirus PZA</taxon>
    </lineage>
</organism>
<protein>
    <recommendedName>
        <fullName>DNA polymerase</fullName>
        <ecNumber evidence="1">2.7.7.7</ecNumber>
        <ecNumber evidence="1">3.1.11.-</ecNumber>
    </recommendedName>
    <alternativeName>
        <fullName evidence="2">Gene product 2</fullName>
        <shortName evidence="2">gp2</shortName>
    </alternativeName>
    <alternativeName>
        <fullName>Protein p2</fullName>
    </alternativeName>
</protein>
<dbReference type="EC" id="2.7.7.7" evidence="1"/>
<dbReference type="EC" id="3.1.11.-" evidence="1"/>
<dbReference type="EMBL" id="M11813">
    <property type="protein sequence ID" value="AAA88478.1"/>
    <property type="molecule type" value="Genomic_DNA"/>
</dbReference>
<dbReference type="PIR" id="D24528">
    <property type="entry name" value="ERBP2Z"/>
</dbReference>
<dbReference type="SMR" id="P06950"/>
<dbReference type="Proteomes" id="UP000000855">
    <property type="component" value="Segment"/>
</dbReference>
<dbReference type="GO" id="GO:0003677">
    <property type="term" value="F:DNA binding"/>
    <property type="evidence" value="ECO:0007669"/>
    <property type="project" value="UniProtKB-KW"/>
</dbReference>
<dbReference type="GO" id="GO:0003887">
    <property type="term" value="F:DNA-directed DNA polymerase activity"/>
    <property type="evidence" value="ECO:0007669"/>
    <property type="project" value="UniProtKB-KW"/>
</dbReference>
<dbReference type="GO" id="GO:0004527">
    <property type="term" value="F:exonuclease activity"/>
    <property type="evidence" value="ECO:0007669"/>
    <property type="project" value="UniProtKB-KW"/>
</dbReference>
<dbReference type="GO" id="GO:0046872">
    <property type="term" value="F:metal ion binding"/>
    <property type="evidence" value="ECO:0007669"/>
    <property type="project" value="UniProtKB-KW"/>
</dbReference>
<dbReference type="GO" id="GO:0001882">
    <property type="term" value="F:nucleoside binding"/>
    <property type="evidence" value="ECO:0007669"/>
    <property type="project" value="InterPro"/>
</dbReference>
<dbReference type="GO" id="GO:0000166">
    <property type="term" value="F:nucleotide binding"/>
    <property type="evidence" value="ECO:0007669"/>
    <property type="project" value="UniProtKB-KW"/>
</dbReference>
<dbReference type="GO" id="GO:0006260">
    <property type="term" value="P:DNA replication"/>
    <property type="evidence" value="ECO:0007669"/>
    <property type="project" value="UniProtKB-KW"/>
</dbReference>
<dbReference type="GO" id="GO:0039693">
    <property type="term" value="P:viral DNA genome replication"/>
    <property type="evidence" value="ECO:0007669"/>
    <property type="project" value="UniProtKB-KW"/>
</dbReference>
<dbReference type="Gene3D" id="4.10.80.20">
    <property type="entry name" value="DNA polymerase, domain 5"/>
    <property type="match status" value="1"/>
</dbReference>
<dbReference type="Gene3D" id="4.10.80.30">
    <property type="entry name" value="DNA polymerase, domain 6"/>
    <property type="match status" value="1"/>
</dbReference>
<dbReference type="Gene3D" id="1.10.287.690">
    <property type="entry name" value="Helix hairpin bin"/>
    <property type="match status" value="1"/>
</dbReference>
<dbReference type="Gene3D" id="3.90.1600.10">
    <property type="entry name" value="Palm domain of DNA polymerase"/>
    <property type="match status" value="1"/>
</dbReference>
<dbReference type="Gene3D" id="3.30.420.10">
    <property type="entry name" value="Ribonuclease H-like superfamily/Ribonuclease H"/>
    <property type="match status" value="1"/>
</dbReference>
<dbReference type="Gene3D" id="3.30.1770.10">
    <property type="entry name" value="TPR 1 domain of DNA polymerase"/>
    <property type="match status" value="1"/>
</dbReference>
<dbReference type="InterPro" id="IPR006172">
    <property type="entry name" value="DNA-dir_DNA_pol_B"/>
</dbReference>
<dbReference type="InterPro" id="IPR017964">
    <property type="entry name" value="DNA-dir_DNA_pol_B_CS"/>
</dbReference>
<dbReference type="InterPro" id="IPR004868">
    <property type="entry name" value="DNA-dir_DNA_pol_B_mt/vir"/>
</dbReference>
<dbReference type="InterPro" id="IPR014416">
    <property type="entry name" value="DNA-dir_DNA_polB_phi29_vir"/>
</dbReference>
<dbReference type="InterPro" id="IPR043502">
    <property type="entry name" value="DNA/RNA_pol_sf"/>
</dbReference>
<dbReference type="InterPro" id="IPR023211">
    <property type="entry name" value="DNA_pol_palm_dom_sf"/>
</dbReference>
<dbReference type="InterPro" id="IPR012337">
    <property type="entry name" value="RNaseH-like_sf"/>
</dbReference>
<dbReference type="InterPro" id="IPR036397">
    <property type="entry name" value="RNaseH_sf"/>
</dbReference>
<dbReference type="PANTHER" id="PTHR33568">
    <property type="entry name" value="DNA POLYMERASE"/>
    <property type="match status" value="1"/>
</dbReference>
<dbReference type="PANTHER" id="PTHR33568:SF3">
    <property type="entry name" value="DNA-DIRECTED DNA POLYMERASE"/>
    <property type="match status" value="1"/>
</dbReference>
<dbReference type="Pfam" id="PF03175">
    <property type="entry name" value="DNA_pol_B_2"/>
    <property type="match status" value="1"/>
</dbReference>
<dbReference type="PIRSF" id="PIRSF004178">
    <property type="entry name" value="Dpol_Bac_phage"/>
    <property type="match status" value="1"/>
</dbReference>
<dbReference type="PRINTS" id="PR00106">
    <property type="entry name" value="DNAPOLB"/>
</dbReference>
<dbReference type="SMART" id="SM00486">
    <property type="entry name" value="POLBc"/>
    <property type="match status" value="1"/>
</dbReference>
<dbReference type="SUPFAM" id="SSF56672">
    <property type="entry name" value="DNA/RNA polymerases"/>
    <property type="match status" value="1"/>
</dbReference>
<dbReference type="SUPFAM" id="SSF53098">
    <property type="entry name" value="Ribonuclease H-like"/>
    <property type="match status" value="1"/>
</dbReference>
<dbReference type="PROSITE" id="PS00116">
    <property type="entry name" value="DNA_POLYMERASE_B"/>
    <property type="match status" value="1"/>
</dbReference>
<gene>
    <name type="primary">2</name>
</gene>
<accession>P06950</accession>
<reference key="1">
    <citation type="journal article" date="1985" name="Gene">
        <title>Nucleotide sequence of the major early region of Bacillus subtilis phage PZA, a close relative of phi 29.</title>
        <authorList>
            <person name="Paces V."/>
            <person name="Vlcek C."/>
            <person name="Urbanek P."/>
            <person name="Hostomsky Z."/>
        </authorList>
    </citation>
    <scope>NUCLEOTIDE SEQUENCE [GENOMIC DNA]</scope>
</reference>
<proteinExistence type="inferred from homology"/>
<sequence length="572" mass="66262">MPRKMYSCDFETTTKVEDCRVWAYGYMNIEDHSEYKIGNSLDEFMAWVLKVQADLYFHNLKFDGAFIINWLERNGFKWSADGLPNTYNTIISRMGQWYMIDICLGYKGKRKIHTVIYDSLKKLPFPVKKIAKDFKLTVLKGDIDYHKERPVGYEITPDEYAYIKNDIQIIAEALLIQFKQGLDRMTAGSDDLKGFKDIITTKKFKKVFPTLSLGLDKEVRYAYRGGFTWLNDRFKEKEIGEGMVFDVNSLYPAQMYSRLLPYGEPIVFEGKYVWDEDYPLHIQHIRCEFELKEGYIPTIQIKRSRFYKGNEYLKSSGGEIADLWVSNVDLELMKEHYDLYNVEYISGLKFKATTGLFKDFIDKWTHIKTTSEGAIKQLAKLMLNSLYGKFASNPDVTGKVPYLKENGALGFRLGEEETKDPVYTPMGVFITAWARYTTITAAQACFDRIIYCDTDSIHLTGTEIPDVIKDIVDPKKLGYWAHESTFKRAKYLRQKTYIQDIYMKEVDGKLVEGSPDDYTTIKFSVKCAGMTDKIKKEVTFENFKVGFSRKMKPKPVQVPGGVVLVDDTFTIK</sequence>
<evidence type="ECO:0000250" key="1">
    <source>
        <dbReference type="UniProtKB" id="P03680"/>
    </source>
</evidence>
<evidence type="ECO:0000305" key="2"/>
<name>DPOL_BPPZA</name>